<comment type="function">
    <text>Seems to dephosphorylate a protein of 130 kDa (p130).</text>
</comment>
<comment type="catalytic activity">
    <reaction evidence="2">
        <text>O-phospho-L-tyrosyl-[protein] + H2O = L-tyrosyl-[protein] + phosphate</text>
        <dbReference type="Rhea" id="RHEA:10684"/>
        <dbReference type="Rhea" id="RHEA-COMP:10136"/>
        <dbReference type="Rhea" id="RHEA-COMP:20101"/>
        <dbReference type="ChEBI" id="CHEBI:15377"/>
        <dbReference type="ChEBI" id="CHEBI:43474"/>
        <dbReference type="ChEBI" id="CHEBI:46858"/>
        <dbReference type="ChEBI" id="CHEBI:61978"/>
        <dbReference type="EC" id="3.1.3.48"/>
    </reaction>
</comment>
<comment type="subcellular location">
    <subcellularLocation>
        <location>Cytoplasm</location>
    </subcellularLocation>
</comment>
<comment type="tissue specificity">
    <text>In the anterior-like and prestalk cell types.</text>
</comment>
<comment type="developmental stage">
    <text>Expressed at moderate levels during growth and development.</text>
</comment>
<comment type="similarity">
    <text evidence="4">Belongs to the protein-tyrosine phosphatase family. Non-receptor class subfamily.</text>
</comment>
<feature type="chain" id="PRO_0000094888" description="Tyrosine-protein phosphatase 3">
    <location>
        <begin position="1"/>
        <end position="990"/>
    </location>
</feature>
<feature type="domain" description="Tyrosine-protein phosphatase" evidence="1">
    <location>
        <begin position="422"/>
        <end position="715"/>
    </location>
</feature>
<feature type="region of interest" description="Disordered" evidence="3">
    <location>
        <begin position="47"/>
        <end position="88"/>
    </location>
</feature>
<feature type="region of interest" description="Disordered" evidence="3">
    <location>
        <begin position="100"/>
        <end position="193"/>
    </location>
</feature>
<feature type="region of interest" description="Disordered" evidence="3">
    <location>
        <begin position="246"/>
        <end position="414"/>
    </location>
</feature>
<feature type="region of interest" description="Disordered" evidence="3">
    <location>
        <begin position="431"/>
        <end position="452"/>
    </location>
</feature>
<feature type="region of interest" description="Disordered" evidence="3">
    <location>
        <begin position="786"/>
        <end position="814"/>
    </location>
</feature>
<feature type="region of interest" description="Disordered" evidence="3">
    <location>
        <begin position="834"/>
        <end position="990"/>
    </location>
</feature>
<feature type="compositionally biased region" description="Low complexity" evidence="3">
    <location>
        <begin position="52"/>
        <end position="88"/>
    </location>
</feature>
<feature type="compositionally biased region" description="Low complexity" evidence="3">
    <location>
        <begin position="100"/>
        <end position="117"/>
    </location>
</feature>
<feature type="compositionally biased region" description="Polar residues" evidence="3">
    <location>
        <begin position="127"/>
        <end position="136"/>
    </location>
</feature>
<feature type="compositionally biased region" description="Low complexity" evidence="3">
    <location>
        <begin position="137"/>
        <end position="191"/>
    </location>
</feature>
<feature type="compositionally biased region" description="Low complexity" evidence="3">
    <location>
        <begin position="250"/>
        <end position="271"/>
    </location>
</feature>
<feature type="compositionally biased region" description="Low complexity" evidence="3">
    <location>
        <begin position="278"/>
        <end position="293"/>
    </location>
</feature>
<feature type="compositionally biased region" description="Low complexity" evidence="3">
    <location>
        <begin position="310"/>
        <end position="327"/>
    </location>
</feature>
<feature type="compositionally biased region" description="Low complexity" evidence="3">
    <location>
        <begin position="334"/>
        <end position="413"/>
    </location>
</feature>
<feature type="compositionally biased region" description="Basic residues" evidence="3">
    <location>
        <begin position="437"/>
        <end position="447"/>
    </location>
</feature>
<feature type="compositionally biased region" description="Polar residues" evidence="3">
    <location>
        <begin position="786"/>
        <end position="795"/>
    </location>
</feature>
<feature type="compositionally biased region" description="Low complexity" evidence="3">
    <location>
        <begin position="796"/>
        <end position="806"/>
    </location>
</feature>
<feature type="compositionally biased region" description="Low complexity" evidence="3">
    <location>
        <begin position="834"/>
        <end position="850"/>
    </location>
</feature>
<feature type="compositionally biased region" description="Polar residues" evidence="3">
    <location>
        <begin position="851"/>
        <end position="868"/>
    </location>
</feature>
<feature type="compositionally biased region" description="Low complexity" evidence="3">
    <location>
        <begin position="878"/>
        <end position="916"/>
    </location>
</feature>
<feature type="compositionally biased region" description="Low complexity" evidence="3">
    <location>
        <begin position="924"/>
        <end position="968"/>
    </location>
</feature>
<feature type="active site" description="Phosphocysteine intermediate" evidence="1 2">
    <location>
        <position position="650"/>
    </location>
</feature>
<feature type="sequence conflict" description="In Ref. 1; AAC47041." evidence="4" ref="1">
    <location>
        <position position="187"/>
    </location>
</feature>
<proteinExistence type="evidence at transcript level"/>
<keyword id="KW-0963">Cytoplasm</keyword>
<keyword id="KW-0378">Hydrolase</keyword>
<keyword id="KW-0904">Protein phosphatase</keyword>
<keyword id="KW-1185">Reference proteome</keyword>
<gene>
    <name type="primary">ptpC</name>
    <name type="synonym">ptp3</name>
    <name type="ORF">DDB_G0282145</name>
</gene>
<sequence length="990" mass="110110">MISSSMSYRHSTNSVYTLNPHLNIPISTSTTIPPTSFYANNTPEMIQSQSENTNTNNINNSSSNINNNNNNTPDSMSMSTSLSSSPSVSFNHLDLNSINNKINNNTTTNNNNNNNNNNDDKFDTNALKLSNTMIIKNNNNNNNNNNNNNNNNNNNNNNNNNNNNNNNNNNNNNNNNNNNNNNNNNNNSNSNIEINVPSIQFDNEPAMEVDSVAPLNVPSNHTRTTLAMHNTKSLSTSNIGLLNILPNQQSSSSSSLSSTTTTTTTTSSSLLMPQSLFNNSTYNNHHNNNNSSNAGIVGGLNGSTSSLPTQAQVQLQQMQQQMQQHQQHQYKKANLSSLSTVVDNNLNNNPMNTSTSSPAQPNASPFSFSSSSLFSNSSLSNSGSGSASTTSTSTSSSNSMSSSPPPSLKTSFSQLDEDREKMRLEFEMIKKPEMASKKSHKHHQRHYSHNDLDNRKHDEEKFFSALQPNNYGKNRYHDVLPNESTRVRLTPIESGDGDYINANYINGEVPNSYRYYIACQAPLPSTIKDFWRMVWEERSSVIVCLTKLEENGKKKADVYYPETSQAQEYGSFWIHLHKKVMFKDIGVSSLHLYKKGEEFPREVVLLHYTQWPDCGAPPSSSHIRTLSVMVNTFKARGSAKNTNGPVIVHCSAGIGRSGTFISININMAKIERFGNDPSQMNISIKDSVLELRRQRRGMVQTLDQYIFIFKVINDVLTDMGIRSLSSPSKRRSCEMIKSTPMPRLDISIPPPLTFTPKDFQSSISPSTDMIASLSIITQMTQTLKFPPQQQQDNPFSKSSIKISPSPLNSTNISIPKNQQFQHPFQIQPQLDLNLQQQQQQSSQQLNDNPPLNMSSNSIKFPPVTSLSSCHLFEDSKNNDNNNKQQQQQQQQQQKNNQQCSGFSHFLNNNNNNDNNGSSGGGFNGSFLFNSNNSGSSSTNSECSNNNKNNNNNSNNNNNNNNNKNSDNNGTKDKDENDSCESPRVTPIKCF</sequence>
<organism>
    <name type="scientific">Dictyostelium discoideum</name>
    <name type="common">Social amoeba</name>
    <dbReference type="NCBI Taxonomy" id="44689"/>
    <lineage>
        <taxon>Eukaryota</taxon>
        <taxon>Amoebozoa</taxon>
        <taxon>Evosea</taxon>
        <taxon>Eumycetozoa</taxon>
        <taxon>Dictyostelia</taxon>
        <taxon>Dictyosteliales</taxon>
        <taxon>Dictyosteliaceae</taxon>
        <taxon>Dictyostelium</taxon>
    </lineage>
</organism>
<dbReference type="EC" id="3.1.3.48"/>
<dbReference type="EMBL" id="U38197">
    <property type="protein sequence ID" value="AAC47041.1"/>
    <property type="molecule type" value="mRNA"/>
</dbReference>
<dbReference type="EMBL" id="AAFI02000045">
    <property type="protein sequence ID" value="EAL66352.1"/>
    <property type="molecule type" value="Genomic_DNA"/>
</dbReference>
<dbReference type="RefSeq" id="XP_640326.1">
    <property type="nucleotide sequence ID" value="XM_635234.1"/>
</dbReference>
<dbReference type="SMR" id="P54637"/>
<dbReference type="FunCoup" id="P54637">
    <property type="interactions" value="348"/>
</dbReference>
<dbReference type="STRING" id="44689.P54637"/>
<dbReference type="PaxDb" id="44689-DDB0214986"/>
<dbReference type="EnsemblProtists" id="EAL66352">
    <property type="protein sequence ID" value="EAL66352"/>
    <property type="gene ID" value="DDB_G0282145"/>
</dbReference>
<dbReference type="GeneID" id="8623427"/>
<dbReference type="KEGG" id="ddi:DDB_G0282145"/>
<dbReference type="dictyBase" id="DDB_G0282145">
    <property type="gene designation" value="ptpC"/>
</dbReference>
<dbReference type="VEuPathDB" id="AmoebaDB:DDB_G0282145"/>
<dbReference type="eggNOG" id="KOG0789">
    <property type="taxonomic scope" value="Eukaryota"/>
</dbReference>
<dbReference type="HOGENOM" id="CLU_301777_0_0_1"/>
<dbReference type="InParanoid" id="P54637"/>
<dbReference type="OMA" id="HQRHYSH"/>
<dbReference type="Reactome" id="R-DDI-5675221">
    <property type="pathway name" value="Negative regulation of MAPK pathway"/>
</dbReference>
<dbReference type="Reactome" id="R-DDI-6798695">
    <property type="pathway name" value="Neutrophil degranulation"/>
</dbReference>
<dbReference type="PRO" id="PR:P54637"/>
<dbReference type="Proteomes" id="UP000002195">
    <property type="component" value="Chromosome 3"/>
</dbReference>
<dbReference type="GO" id="GO:0005829">
    <property type="term" value="C:cytosol"/>
    <property type="evidence" value="ECO:0000314"/>
    <property type="project" value="dictyBase"/>
</dbReference>
<dbReference type="GO" id="GO:0005768">
    <property type="term" value="C:endosome"/>
    <property type="evidence" value="ECO:0000314"/>
    <property type="project" value="dictyBase"/>
</dbReference>
<dbReference type="GO" id="GO:0004725">
    <property type="term" value="F:protein tyrosine phosphatase activity"/>
    <property type="evidence" value="ECO:0000314"/>
    <property type="project" value="dictyBase"/>
</dbReference>
<dbReference type="GO" id="GO:0019722">
    <property type="term" value="P:calcium-mediated signaling"/>
    <property type="evidence" value="ECO:0000315"/>
    <property type="project" value="dictyBase"/>
</dbReference>
<dbReference type="GO" id="GO:0035556">
    <property type="term" value="P:intracellular signal transduction"/>
    <property type="evidence" value="ECO:0000315"/>
    <property type="project" value="dictyBase"/>
</dbReference>
<dbReference type="GO" id="GO:1904893">
    <property type="term" value="P:negative regulation of receptor signaling pathway via STAT"/>
    <property type="evidence" value="ECO:0000315"/>
    <property type="project" value="dictyBase"/>
</dbReference>
<dbReference type="GO" id="GO:0034504">
    <property type="term" value="P:protein localization to nucleus"/>
    <property type="evidence" value="ECO:0000315"/>
    <property type="project" value="dictyBase"/>
</dbReference>
<dbReference type="GO" id="GO:1903013">
    <property type="term" value="P:response to differentiation-inducing factor 1"/>
    <property type="evidence" value="ECO:0000314"/>
    <property type="project" value="dictyBase"/>
</dbReference>
<dbReference type="GO" id="GO:0006970">
    <property type="term" value="P:response to osmotic stress"/>
    <property type="evidence" value="ECO:0000315"/>
    <property type="project" value="dictyBase"/>
</dbReference>
<dbReference type="CDD" id="cd00047">
    <property type="entry name" value="PTPc"/>
    <property type="match status" value="1"/>
</dbReference>
<dbReference type="FunFam" id="3.90.190.10:FF:000356">
    <property type="entry name" value="Tyrosine-protein phosphatase 3"/>
    <property type="match status" value="1"/>
</dbReference>
<dbReference type="Gene3D" id="3.90.190.10">
    <property type="entry name" value="Protein tyrosine phosphatase superfamily"/>
    <property type="match status" value="1"/>
</dbReference>
<dbReference type="InterPro" id="IPR029021">
    <property type="entry name" value="Prot-tyrosine_phosphatase-like"/>
</dbReference>
<dbReference type="InterPro" id="IPR050348">
    <property type="entry name" value="Protein-Tyr_Phosphatase"/>
</dbReference>
<dbReference type="InterPro" id="IPR000242">
    <property type="entry name" value="PTP_cat"/>
</dbReference>
<dbReference type="InterPro" id="IPR016130">
    <property type="entry name" value="Tyr_Pase_AS"/>
</dbReference>
<dbReference type="InterPro" id="IPR003595">
    <property type="entry name" value="Tyr_Pase_cat"/>
</dbReference>
<dbReference type="InterPro" id="IPR000387">
    <property type="entry name" value="Tyr_Pase_dom"/>
</dbReference>
<dbReference type="PANTHER" id="PTHR19134">
    <property type="entry name" value="RECEPTOR-TYPE TYROSINE-PROTEIN PHOSPHATASE"/>
    <property type="match status" value="1"/>
</dbReference>
<dbReference type="PANTHER" id="PTHR19134:SF549">
    <property type="entry name" value="TYROSINE-PROTEIN PHOSPHATASE 3"/>
    <property type="match status" value="1"/>
</dbReference>
<dbReference type="Pfam" id="PF00102">
    <property type="entry name" value="Y_phosphatase"/>
    <property type="match status" value="1"/>
</dbReference>
<dbReference type="PRINTS" id="PR00700">
    <property type="entry name" value="PRTYPHPHTASE"/>
</dbReference>
<dbReference type="SMART" id="SM00194">
    <property type="entry name" value="PTPc"/>
    <property type="match status" value="1"/>
</dbReference>
<dbReference type="SMART" id="SM00404">
    <property type="entry name" value="PTPc_motif"/>
    <property type="match status" value="1"/>
</dbReference>
<dbReference type="SUPFAM" id="SSF52799">
    <property type="entry name" value="(Phosphotyrosine protein) phosphatases II"/>
    <property type="match status" value="1"/>
</dbReference>
<dbReference type="PROSITE" id="PS00383">
    <property type="entry name" value="TYR_PHOSPHATASE_1"/>
    <property type="match status" value="1"/>
</dbReference>
<dbReference type="PROSITE" id="PS50056">
    <property type="entry name" value="TYR_PHOSPHATASE_2"/>
    <property type="match status" value="1"/>
</dbReference>
<dbReference type="PROSITE" id="PS50055">
    <property type="entry name" value="TYR_PHOSPHATASE_PTP"/>
    <property type="match status" value="1"/>
</dbReference>
<evidence type="ECO:0000255" key="1">
    <source>
        <dbReference type="PROSITE-ProRule" id="PRU00160"/>
    </source>
</evidence>
<evidence type="ECO:0000255" key="2">
    <source>
        <dbReference type="PROSITE-ProRule" id="PRU10044"/>
    </source>
</evidence>
<evidence type="ECO:0000256" key="3">
    <source>
        <dbReference type="SAM" id="MobiDB-lite"/>
    </source>
</evidence>
<evidence type="ECO:0000305" key="4"/>
<protein>
    <recommendedName>
        <fullName>Tyrosine-protein phosphatase 3</fullName>
        <ecNumber>3.1.3.48</ecNumber>
    </recommendedName>
    <alternativeName>
        <fullName>Protein-tyrosine-phosphate phosphohydrolase 3</fullName>
    </alternativeName>
</protein>
<name>PTP3_DICDI</name>
<reference key="1">
    <citation type="journal article" date="1996" name="Mol. Cell. Biol.">
        <title>Multiple roles of the novel protein tyrosine phosphatase PTP3 during Dictyostelium growth and development.</title>
        <authorList>
            <person name="Gamper M."/>
            <person name="Howard P.K."/>
            <person name="Hunter T."/>
            <person name="Firtel R.A."/>
        </authorList>
    </citation>
    <scope>NUCLEOTIDE SEQUENCE [MRNA]</scope>
    <source>
        <strain>AX3</strain>
    </source>
</reference>
<reference key="2">
    <citation type="journal article" date="2005" name="Nature">
        <title>The genome of the social amoeba Dictyostelium discoideum.</title>
        <authorList>
            <person name="Eichinger L."/>
            <person name="Pachebat J.A."/>
            <person name="Gloeckner G."/>
            <person name="Rajandream M.A."/>
            <person name="Sucgang R."/>
            <person name="Berriman M."/>
            <person name="Song J."/>
            <person name="Olsen R."/>
            <person name="Szafranski K."/>
            <person name="Xu Q."/>
            <person name="Tunggal B."/>
            <person name="Kummerfeld S."/>
            <person name="Madera M."/>
            <person name="Konfortov B.A."/>
            <person name="Rivero F."/>
            <person name="Bankier A.T."/>
            <person name="Lehmann R."/>
            <person name="Hamlin N."/>
            <person name="Davies R."/>
            <person name="Gaudet P."/>
            <person name="Fey P."/>
            <person name="Pilcher K."/>
            <person name="Chen G."/>
            <person name="Saunders D."/>
            <person name="Sodergren E.J."/>
            <person name="Davis P."/>
            <person name="Kerhornou A."/>
            <person name="Nie X."/>
            <person name="Hall N."/>
            <person name="Anjard C."/>
            <person name="Hemphill L."/>
            <person name="Bason N."/>
            <person name="Farbrother P."/>
            <person name="Desany B."/>
            <person name="Just E."/>
            <person name="Morio T."/>
            <person name="Rost R."/>
            <person name="Churcher C.M."/>
            <person name="Cooper J."/>
            <person name="Haydock S."/>
            <person name="van Driessche N."/>
            <person name="Cronin A."/>
            <person name="Goodhead I."/>
            <person name="Muzny D.M."/>
            <person name="Mourier T."/>
            <person name="Pain A."/>
            <person name="Lu M."/>
            <person name="Harper D."/>
            <person name="Lindsay R."/>
            <person name="Hauser H."/>
            <person name="James K.D."/>
            <person name="Quiles M."/>
            <person name="Madan Babu M."/>
            <person name="Saito T."/>
            <person name="Buchrieser C."/>
            <person name="Wardroper A."/>
            <person name="Felder M."/>
            <person name="Thangavelu M."/>
            <person name="Johnson D."/>
            <person name="Knights A."/>
            <person name="Loulseged H."/>
            <person name="Mungall K.L."/>
            <person name="Oliver K."/>
            <person name="Price C."/>
            <person name="Quail M.A."/>
            <person name="Urushihara H."/>
            <person name="Hernandez J."/>
            <person name="Rabbinowitsch E."/>
            <person name="Steffen D."/>
            <person name="Sanders M."/>
            <person name="Ma J."/>
            <person name="Kohara Y."/>
            <person name="Sharp S."/>
            <person name="Simmonds M.N."/>
            <person name="Spiegler S."/>
            <person name="Tivey A."/>
            <person name="Sugano S."/>
            <person name="White B."/>
            <person name="Walker D."/>
            <person name="Woodward J.R."/>
            <person name="Winckler T."/>
            <person name="Tanaka Y."/>
            <person name="Shaulsky G."/>
            <person name="Schleicher M."/>
            <person name="Weinstock G.M."/>
            <person name="Rosenthal A."/>
            <person name="Cox E.C."/>
            <person name="Chisholm R.L."/>
            <person name="Gibbs R.A."/>
            <person name="Loomis W.F."/>
            <person name="Platzer M."/>
            <person name="Kay R.R."/>
            <person name="Williams J.G."/>
            <person name="Dear P.H."/>
            <person name="Noegel A.A."/>
            <person name="Barrell B.G."/>
            <person name="Kuspa A."/>
        </authorList>
    </citation>
    <scope>NUCLEOTIDE SEQUENCE [LARGE SCALE GENOMIC DNA]</scope>
    <source>
        <strain>AX4</strain>
    </source>
</reference>
<accession>P54637</accession>
<accession>Q54SY3</accession>